<comment type="function">
    <text evidence="1">Mediates zinc uptake. May also transport other divalent cations.</text>
</comment>
<comment type="catalytic activity">
    <reaction evidence="1">
        <text>Zn(2+)(in) = Zn(2+)(out)</text>
        <dbReference type="Rhea" id="RHEA:29351"/>
        <dbReference type="ChEBI" id="CHEBI:29105"/>
    </reaction>
</comment>
<comment type="subcellular location">
    <subcellularLocation>
        <location evidence="1">Cell inner membrane</location>
        <topology evidence="1">Multi-pass membrane protein</topology>
    </subcellularLocation>
</comment>
<comment type="similarity">
    <text evidence="1">Belongs to the ZIP transporter (TC 2.A.5) family. ZupT subfamily.</text>
</comment>
<proteinExistence type="inferred from homology"/>
<organism>
    <name type="scientific">Salmonella paratyphi C (strain RKS4594)</name>
    <dbReference type="NCBI Taxonomy" id="476213"/>
    <lineage>
        <taxon>Bacteria</taxon>
        <taxon>Pseudomonadati</taxon>
        <taxon>Pseudomonadota</taxon>
        <taxon>Gammaproteobacteria</taxon>
        <taxon>Enterobacterales</taxon>
        <taxon>Enterobacteriaceae</taxon>
        <taxon>Salmonella</taxon>
    </lineage>
</organism>
<sequence length="257" mass="26544">MSVPLILTLLAGAATFIGAFLGVLGQKPSNRVLAFSLGFAAGIMLLISLMEMLPAALDTEGMSPVLGYGMFIIGLLGYFGLDRLLPHAHPQDLVQKRQQPLPGSIKRTAILLTLGISLHNFPEGIATFVTASSNLELGFGIALAVALHNIPEGLAVAGPVYAATGSKRTAIFWAGISGMAEILGGVLAWLILGSLVSPIVMAAIMAAVAGIMVALSVDELMPLAKEIDPNNNPSYGVLCGMSIMGLSLVILQTIGIG</sequence>
<name>ZUPT_SALPC</name>
<reference key="1">
    <citation type="journal article" date="2009" name="PLoS ONE">
        <title>Salmonella paratyphi C: genetic divergence from Salmonella choleraesuis and pathogenic convergence with Salmonella typhi.</title>
        <authorList>
            <person name="Liu W.-Q."/>
            <person name="Feng Y."/>
            <person name="Wang Y."/>
            <person name="Zou Q.-H."/>
            <person name="Chen F."/>
            <person name="Guo J.-T."/>
            <person name="Peng Y.-H."/>
            <person name="Jin Y."/>
            <person name="Li Y.-G."/>
            <person name="Hu S.-N."/>
            <person name="Johnston R.N."/>
            <person name="Liu G.-R."/>
            <person name="Liu S.-L."/>
        </authorList>
    </citation>
    <scope>NUCLEOTIDE SEQUENCE [LARGE SCALE GENOMIC DNA]</scope>
    <source>
        <strain>RKS4594</strain>
    </source>
</reference>
<keyword id="KW-0997">Cell inner membrane</keyword>
<keyword id="KW-1003">Cell membrane</keyword>
<keyword id="KW-0406">Ion transport</keyword>
<keyword id="KW-0408">Iron</keyword>
<keyword id="KW-0472">Membrane</keyword>
<keyword id="KW-0479">Metal-binding</keyword>
<keyword id="KW-0812">Transmembrane</keyword>
<keyword id="KW-1133">Transmembrane helix</keyword>
<keyword id="KW-0813">Transport</keyword>
<keyword id="KW-0862">Zinc</keyword>
<keyword id="KW-0864">Zinc transport</keyword>
<gene>
    <name evidence="1" type="primary">zupT</name>
    <name type="ordered locus">SPC_3264</name>
</gene>
<accession>C0PYW1</accession>
<feature type="chain" id="PRO_1000200396" description="Zinc transporter ZupT">
    <location>
        <begin position="1"/>
        <end position="257"/>
    </location>
</feature>
<feature type="transmembrane region" description="Helical" evidence="1">
    <location>
        <begin position="5"/>
        <end position="25"/>
    </location>
</feature>
<feature type="transmembrane region" description="Helical" evidence="1">
    <location>
        <begin position="32"/>
        <end position="52"/>
    </location>
</feature>
<feature type="transmembrane region" description="Helical" evidence="1">
    <location>
        <begin position="61"/>
        <end position="81"/>
    </location>
</feature>
<feature type="transmembrane region" description="Helical" evidence="1">
    <location>
        <begin position="109"/>
        <end position="129"/>
    </location>
</feature>
<feature type="transmembrane region" description="Helical" evidence="1">
    <location>
        <begin position="137"/>
        <end position="157"/>
    </location>
</feature>
<feature type="transmembrane region" description="Helical" evidence="1">
    <location>
        <begin position="171"/>
        <end position="191"/>
    </location>
</feature>
<feature type="transmembrane region" description="Helical" evidence="1">
    <location>
        <begin position="195"/>
        <end position="215"/>
    </location>
</feature>
<feature type="transmembrane region" description="Helical" evidence="1">
    <location>
        <begin position="236"/>
        <end position="256"/>
    </location>
</feature>
<feature type="binding site" description="M2 metal binding site" evidence="1">
    <location>
        <position position="120"/>
    </location>
    <ligand>
        <name>Fe(2+)</name>
        <dbReference type="ChEBI" id="CHEBI:29033"/>
    </ligand>
</feature>
<feature type="binding site" description="M2 metal binding site" evidence="1">
    <location>
        <position position="123"/>
    </location>
    <ligand>
        <name>Fe(2+)</name>
        <dbReference type="ChEBI" id="CHEBI:29033"/>
    </ligand>
</feature>
<feature type="binding site" description="M1 metal binding site" evidence="1">
    <location>
        <position position="123"/>
    </location>
    <ligand>
        <name>Zn(2+)</name>
        <dbReference type="ChEBI" id="CHEBI:29105"/>
    </ligand>
</feature>
<feature type="binding site" description="M1 metal binding site" evidence="1">
    <location>
        <position position="148"/>
    </location>
    <ligand>
        <name>Zn(2+)</name>
        <dbReference type="ChEBI" id="CHEBI:29105"/>
    </ligand>
</feature>
<feature type="binding site" description="M2 metal binding site" evidence="1">
    <location>
        <position position="149"/>
    </location>
    <ligand>
        <name>Fe(2+)</name>
        <dbReference type="ChEBI" id="CHEBI:29033"/>
    </ligand>
</feature>
<feature type="binding site" description="M2 metal binding site" evidence="1">
    <location>
        <position position="152"/>
    </location>
    <ligand>
        <name>Fe(2+)</name>
        <dbReference type="ChEBI" id="CHEBI:29033"/>
    </ligand>
</feature>
<feature type="binding site" description="M1 metal binding site" evidence="1">
    <location>
        <position position="152"/>
    </location>
    <ligand>
        <name>Zn(2+)</name>
        <dbReference type="ChEBI" id="CHEBI:29105"/>
    </ligand>
</feature>
<feature type="binding site" description="M2 metal binding site" evidence="1">
    <location>
        <position position="181"/>
    </location>
    <ligand>
        <name>Fe(2+)</name>
        <dbReference type="ChEBI" id="CHEBI:29033"/>
    </ligand>
</feature>
<protein>
    <recommendedName>
        <fullName evidence="1">Zinc transporter ZupT</fullName>
    </recommendedName>
</protein>
<evidence type="ECO:0000255" key="1">
    <source>
        <dbReference type="HAMAP-Rule" id="MF_00548"/>
    </source>
</evidence>
<dbReference type="EMBL" id="CP000857">
    <property type="protein sequence ID" value="ACN47349.1"/>
    <property type="molecule type" value="Genomic_DNA"/>
</dbReference>
<dbReference type="RefSeq" id="WP_000115874.1">
    <property type="nucleotide sequence ID" value="NC_012125.1"/>
</dbReference>
<dbReference type="SMR" id="C0PYW1"/>
<dbReference type="KEGG" id="sei:SPC_3264"/>
<dbReference type="HOGENOM" id="CLU_015114_1_3_6"/>
<dbReference type="Proteomes" id="UP000001599">
    <property type="component" value="Chromosome"/>
</dbReference>
<dbReference type="GO" id="GO:0005886">
    <property type="term" value="C:plasma membrane"/>
    <property type="evidence" value="ECO:0007669"/>
    <property type="project" value="UniProtKB-SubCell"/>
</dbReference>
<dbReference type="GO" id="GO:0046872">
    <property type="term" value="F:metal ion binding"/>
    <property type="evidence" value="ECO:0007669"/>
    <property type="project" value="UniProtKB-KW"/>
</dbReference>
<dbReference type="GO" id="GO:0005385">
    <property type="term" value="F:zinc ion transmembrane transporter activity"/>
    <property type="evidence" value="ECO:0007669"/>
    <property type="project" value="UniProtKB-UniRule"/>
</dbReference>
<dbReference type="HAMAP" id="MF_00548">
    <property type="entry name" value="ZupT"/>
    <property type="match status" value="1"/>
</dbReference>
<dbReference type="InterPro" id="IPR003689">
    <property type="entry name" value="ZIP"/>
</dbReference>
<dbReference type="InterPro" id="IPR023498">
    <property type="entry name" value="Zn_transptr_ZupT"/>
</dbReference>
<dbReference type="NCBIfam" id="NF003243">
    <property type="entry name" value="PRK04201.1"/>
    <property type="match status" value="1"/>
</dbReference>
<dbReference type="PANTHER" id="PTHR11040:SF205">
    <property type="entry name" value="ZINC TRANSPORTER ZUPT"/>
    <property type="match status" value="1"/>
</dbReference>
<dbReference type="PANTHER" id="PTHR11040">
    <property type="entry name" value="ZINC/IRON TRANSPORTER"/>
    <property type="match status" value="1"/>
</dbReference>
<dbReference type="Pfam" id="PF02535">
    <property type="entry name" value="Zip"/>
    <property type="match status" value="2"/>
</dbReference>